<sequence>MIQVESRLEVADNTGAKSVLCIKVLGGSKRRYASVGDVIKVSIKEAAPRGRVKKGEIYSAVVVRTAKGIRRSDGSLVKFDGNAAVLLNAKLEPIGTRIFGPVTRELRTEKFMKIVSLAPEVL</sequence>
<dbReference type="EMBL" id="CP000267">
    <property type="protein sequence ID" value="ABD71920.1"/>
    <property type="molecule type" value="Genomic_DNA"/>
</dbReference>
<dbReference type="RefSeq" id="WP_011466477.1">
    <property type="nucleotide sequence ID" value="NC_007908.1"/>
</dbReference>
<dbReference type="SMR" id="Q21QN3"/>
<dbReference type="STRING" id="338969.Rfer_4233"/>
<dbReference type="KEGG" id="rfr:Rfer_4233"/>
<dbReference type="eggNOG" id="COG0093">
    <property type="taxonomic scope" value="Bacteria"/>
</dbReference>
<dbReference type="HOGENOM" id="CLU_095071_2_1_4"/>
<dbReference type="OrthoDB" id="9806379at2"/>
<dbReference type="Proteomes" id="UP000008332">
    <property type="component" value="Chromosome"/>
</dbReference>
<dbReference type="GO" id="GO:0022625">
    <property type="term" value="C:cytosolic large ribosomal subunit"/>
    <property type="evidence" value="ECO:0007669"/>
    <property type="project" value="TreeGrafter"/>
</dbReference>
<dbReference type="GO" id="GO:0070180">
    <property type="term" value="F:large ribosomal subunit rRNA binding"/>
    <property type="evidence" value="ECO:0007669"/>
    <property type="project" value="TreeGrafter"/>
</dbReference>
<dbReference type="GO" id="GO:0003735">
    <property type="term" value="F:structural constituent of ribosome"/>
    <property type="evidence" value="ECO:0007669"/>
    <property type="project" value="InterPro"/>
</dbReference>
<dbReference type="GO" id="GO:0006412">
    <property type="term" value="P:translation"/>
    <property type="evidence" value="ECO:0007669"/>
    <property type="project" value="UniProtKB-UniRule"/>
</dbReference>
<dbReference type="CDD" id="cd00337">
    <property type="entry name" value="Ribosomal_uL14"/>
    <property type="match status" value="1"/>
</dbReference>
<dbReference type="FunFam" id="2.40.150.20:FF:000001">
    <property type="entry name" value="50S ribosomal protein L14"/>
    <property type="match status" value="1"/>
</dbReference>
<dbReference type="Gene3D" id="2.40.150.20">
    <property type="entry name" value="Ribosomal protein L14"/>
    <property type="match status" value="1"/>
</dbReference>
<dbReference type="HAMAP" id="MF_01367">
    <property type="entry name" value="Ribosomal_uL14"/>
    <property type="match status" value="1"/>
</dbReference>
<dbReference type="InterPro" id="IPR000218">
    <property type="entry name" value="Ribosomal_uL14"/>
</dbReference>
<dbReference type="InterPro" id="IPR005745">
    <property type="entry name" value="Ribosomal_uL14_bac-type"/>
</dbReference>
<dbReference type="InterPro" id="IPR019972">
    <property type="entry name" value="Ribosomal_uL14_CS"/>
</dbReference>
<dbReference type="InterPro" id="IPR036853">
    <property type="entry name" value="Ribosomal_uL14_sf"/>
</dbReference>
<dbReference type="NCBIfam" id="TIGR01067">
    <property type="entry name" value="rplN_bact"/>
    <property type="match status" value="1"/>
</dbReference>
<dbReference type="PANTHER" id="PTHR11761">
    <property type="entry name" value="50S/60S RIBOSOMAL PROTEIN L14/L23"/>
    <property type="match status" value="1"/>
</dbReference>
<dbReference type="PANTHER" id="PTHR11761:SF3">
    <property type="entry name" value="LARGE RIBOSOMAL SUBUNIT PROTEIN UL14M"/>
    <property type="match status" value="1"/>
</dbReference>
<dbReference type="Pfam" id="PF00238">
    <property type="entry name" value="Ribosomal_L14"/>
    <property type="match status" value="1"/>
</dbReference>
<dbReference type="SMART" id="SM01374">
    <property type="entry name" value="Ribosomal_L14"/>
    <property type="match status" value="1"/>
</dbReference>
<dbReference type="SUPFAM" id="SSF50193">
    <property type="entry name" value="Ribosomal protein L14"/>
    <property type="match status" value="1"/>
</dbReference>
<dbReference type="PROSITE" id="PS00049">
    <property type="entry name" value="RIBOSOMAL_L14"/>
    <property type="match status" value="1"/>
</dbReference>
<organism>
    <name type="scientific">Albidiferax ferrireducens (strain ATCC BAA-621 / DSM 15236 / T118)</name>
    <name type="common">Rhodoferax ferrireducens</name>
    <dbReference type="NCBI Taxonomy" id="338969"/>
    <lineage>
        <taxon>Bacteria</taxon>
        <taxon>Pseudomonadati</taxon>
        <taxon>Pseudomonadota</taxon>
        <taxon>Betaproteobacteria</taxon>
        <taxon>Burkholderiales</taxon>
        <taxon>Comamonadaceae</taxon>
        <taxon>Rhodoferax</taxon>
    </lineage>
</organism>
<name>RL14_ALBFT</name>
<feature type="chain" id="PRO_0000266543" description="Large ribosomal subunit protein uL14">
    <location>
        <begin position="1"/>
        <end position="122"/>
    </location>
</feature>
<reference key="1">
    <citation type="submission" date="2006-02" db="EMBL/GenBank/DDBJ databases">
        <title>Complete sequence of chromosome of Rhodoferax ferrireducens DSM 15236.</title>
        <authorList>
            <person name="Copeland A."/>
            <person name="Lucas S."/>
            <person name="Lapidus A."/>
            <person name="Barry K."/>
            <person name="Detter J.C."/>
            <person name="Glavina del Rio T."/>
            <person name="Hammon N."/>
            <person name="Israni S."/>
            <person name="Pitluck S."/>
            <person name="Brettin T."/>
            <person name="Bruce D."/>
            <person name="Han C."/>
            <person name="Tapia R."/>
            <person name="Gilna P."/>
            <person name="Kiss H."/>
            <person name="Schmutz J."/>
            <person name="Larimer F."/>
            <person name="Land M."/>
            <person name="Kyrpides N."/>
            <person name="Ivanova N."/>
            <person name="Richardson P."/>
        </authorList>
    </citation>
    <scope>NUCLEOTIDE SEQUENCE [LARGE SCALE GENOMIC DNA]</scope>
    <source>
        <strain>ATCC BAA-621 / DSM 15236 / T118</strain>
    </source>
</reference>
<evidence type="ECO:0000255" key="1">
    <source>
        <dbReference type="HAMAP-Rule" id="MF_01367"/>
    </source>
</evidence>
<evidence type="ECO:0000305" key="2"/>
<accession>Q21QN3</accession>
<keyword id="KW-1185">Reference proteome</keyword>
<keyword id="KW-0687">Ribonucleoprotein</keyword>
<keyword id="KW-0689">Ribosomal protein</keyword>
<keyword id="KW-0694">RNA-binding</keyword>
<keyword id="KW-0699">rRNA-binding</keyword>
<gene>
    <name evidence="1" type="primary">rplN</name>
    <name type="ordered locus">Rfer_4233</name>
</gene>
<comment type="function">
    <text evidence="1">Binds to 23S rRNA. Forms part of two intersubunit bridges in the 70S ribosome.</text>
</comment>
<comment type="subunit">
    <text evidence="1">Part of the 50S ribosomal subunit. Forms a cluster with proteins L3 and L19. In the 70S ribosome, L14 and L19 interact and together make contacts with the 16S rRNA in bridges B5 and B8.</text>
</comment>
<comment type="similarity">
    <text evidence="1">Belongs to the universal ribosomal protein uL14 family.</text>
</comment>
<protein>
    <recommendedName>
        <fullName evidence="1">Large ribosomal subunit protein uL14</fullName>
    </recommendedName>
    <alternativeName>
        <fullName evidence="2">50S ribosomal protein L14</fullName>
    </alternativeName>
</protein>
<proteinExistence type="inferred from homology"/>